<keyword id="KW-0119">Carbohydrate metabolism</keyword>
<keyword id="KW-0146">Chitin degradation</keyword>
<keyword id="KW-0326">Glycosidase</keyword>
<keyword id="KW-0378">Hydrolase</keyword>
<keyword id="KW-0624">Polysaccharide degradation</keyword>
<keyword id="KW-0732">Signal</keyword>
<feature type="signal peptide">
    <location>
        <begin position="1"/>
        <end position="20"/>
    </location>
</feature>
<feature type="chain" id="PRO_0000011929" description="Chitinase 1">
    <location>
        <begin position="21"/>
        <end position="493"/>
    </location>
</feature>
<feature type="domain" description="GH18" evidence="1">
    <location>
        <begin position="27"/>
        <end position="318"/>
    </location>
</feature>
<feature type="active site" description="Proton donor" evidence="1">
    <location>
        <position position="164"/>
    </location>
</feature>
<sequence length="493" mass="51917">MISCNILGITIAAFITSTLAAYSSNGVNVMYYWGQNSAGGSNTQGSLVSYCQSGQVDVIILSFLNKFNMGGLPEINLASACEQTFFPNTNLLHCPTVGSDIKTCQSNGVKVLLSLGGAAGSYGFSSDSEGQTFAETIWNLFGGGTSDTRPFDDAVIDGIDLDIEGGSSTGYAAFVTALRSKGHFLIGAAPQCPFPDAILGSVIDAVGLDFVNVQFYNNVCSVASGSSFNFDVWNDWAKNKSPNKNIKVMLTVPGSSTAAGSGYASIAELGPIVSSVISQYSSFGGVSVWDASQAWNNNGFHSELYSIVHGSSAALGQAARKTPFPNTSSITTTSLATASSALFPLLYAGRSCSSQSKVSCTSTGSYTICNYGKWVTAPCPPGVICLSSAQSNNTDLTVSAQFFITSFAGGSFKAIINARRTTLTPFEKMKTIEFTVPDHVRLSQCNLGKIEQVGRSVRIRLKDHPNMAFVLNLSGNVSSDAFVAPDPSSWRFS</sequence>
<comment type="catalytic activity">
    <reaction>
        <text>Random endo-hydrolysis of N-acetyl-beta-D-glucosaminide (1-&gt;4)-beta-linkages in chitin and chitodextrins.</text>
        <dbReference type="EC" id="3.2.1.14"/>
    </reaction>
</comment>
<comment type="similarity">
    <text evidence="2">Belongs to the glycosyl hydrolase 18 family. Chitinase class III subfamily.</text>
</comment>
<evidence type="ECO:0000255" key="1">
    <source>
        <dbReference type="PROSITE-ProRule" id="PRU01258"/>
    </source>
</evidence>
<evidence type="ECO:0000305" key="2"/>
<protein>
    <recommendedName>
        <fullName>Chitinase 1</fullName>
        <ecNumber>3.2.1.14</ecNumber>
    </recommendedName>
</protein>
<accession>P29025</accession>
<organism>
    <name type="scientific">Rhizopus niveus</name>
    <dbReference type="NCBI Taxonomy" id="4844"/>
    <lineage>
        <taxon>Eukaryota</taxon>
        <taxon>Fungi</taxon>
        <taxon>Fungi incertae sedis</taxon>
        <taxon>Mucoromycota</taxon>
        <taxon>Mucoromycotina</taxon>
        <taxon>Mucoromycetes</taxon>
        <taxon>Mucorales</taxon>
        <taxon>Mucorineae</taxon>
        <taxon>Rhizopodaceae</taxon>
        <taxon>Rhizopus</taxon>
    </lineage>
</organism>
<reference key="1">
    <citation type="submission" date="1992-06" db="EMBL/GenBank/DDBJ databases">
        <authorList>
            <person name="Yanai K."/>
        </authorList>
    </citation>
    <scope>NUCLEOTIDE SEQUENCE [GENOMIC DNA]</scope>
    <source>
        <strain>NBRC 4810 / AS 3.4817</strain>
    </source>
</reference>
<gene>
    <name type="primary">CHI1</name>
</gene>
<name>CHI1_RHINI</name>
<dbReference type="EC" id="3.2.1.14"/>
<dbReference type="EMBL" id="D10154">
    <property type="protein sequence ID" value="BAA01018.1"/>
    <property type="molecule type" value="Genomic_DNA"/>
</dbReference>
<dbReference type="PIR" id="S36931">
    <property type="entry name" value="S36931"/>
</dbReference>
<dbReference type="SMR" id="P29025"/>
<dbReference type="CAZy" id="CBM19">
    <property type="family name" value="Carbohydrate-Binding Module Family 19"/>
</dbReference>
<dbReference type="CAZy" id="GH18">
    <property type="family name" value="Glycoside Hydrolase Family 18"/>
</dbReference>
<dbReference type="GO" id="GO:0005576">
    <property type="term" value="C:extracellular region"/>
    <property type="evidence" value="ECO:0007669"/>
    <property type="project" value="TreeGrafter"/>
</dbReference>
<dbReference type="GO" id="GO:0008061">
    <property type="term" value="F:chitin binding"/>
    <property type="evidence" value="ECO:0007669"/>
    <property type="project" value="InterPro"/>
</dbReference>
<dbReference type="GO" id="GO:0008843">
    <property type="term" value="F:endochitinase activity"/>
    <property type="evidence" value="ECO:0007669"/>
    <property type="project" value="UniProtKB-EC"/>
</dbReference>
<dbReference type="GO" id="GO:0006032">
    <property type="term" value="P:chitin catabolic process"/>
    <property type="evidence" value="ECO:0007669"/>
    <property type="project" value="UniProtKB-KW"/>
</dbReference>
<dbReference type="GO" id="GO:0000272">
    <property type="term" value="P:polysaccharide catabolic process"/>
    <property type="evidence" value="ECO:0007669"/>
    <property type="project" value="UniProtKB-KW"/>
</dbReference>
<dbReference type="CDD" id="cd02877">
    <property type="entry name" value="GH18_hevamine_XipI_class_III"/>
    <property type="match status" value="1"/>
</dbReference>
<dbReference type="Gene3D" id="3.20.20.80">
    <property type="entry name" value="Glycosidases"/>
    <property type="match status" value="1"/>
</dbReference>
<dbReference type="InterPro" id="IPR005089">
    <property type="entry name" value="CBM19"/>
</dbReference>
<dbReference type="InterPro" id="IPR045321">
    <property type="entry name" value="Cts1-like"/>
</dbReference>
<dbReference type="InterPro" id="IPR001223">
    <property type="entry name" value="Glyco_hydro18_cat"/>
</dbReference>
<dbReference type="InterPro" id="IPR001579">
    <property type="entry name" value="Glyco_hydro_18_chit_AS"/>
</dbReference>
<dbReference type="InterPro" id="IPR017853">
    <property type="entry name" value="Glycoside_hydrolase_SF"/>
</dbReference>
<dbReference type="InterPro" id="IPR050542">
    <property type="entry name" value="Glycosyl_Hydrlase18_Chitinase"/>
</dbReference>
<dbReference type="PANTHER" id="PTHR45708">
    <property type="entry name" value="ENDOCHITINASE"/>
    <property type="match status" value="1"/>
</dbReference>
<dbReference type="PANTHER" id="PTHR45708:SF49">
    <property type="entry name" value="ENDOCHITINASE"/>
    <property type="match status" value="1"/>
</dbReference>
<dbReference type="Pfam" id="PF03427">
    <property type="entry name" value="CBM_19"/>
    <property type="match status" value="1"/>
</dbReference>
<dbReference type="Pfam" id="PF00704">
    <property type="entry name" value="Glyco_hydro_18"/>
    <property type="match status" value="1"/>
</dbReference>
<dbReference type="SUPFAM" id="SSF51445">
    <property type="entry name" value="(Trans)glycosidases"/>
    <property type="match status" value="1"/>
</dbReference>
<dbReference type="PROSITE" id="PS01095">
    <property type="entry name" value="GH18_1"/>
    <property type="match status" value="1"/>
</dbReference>
<dbReference type="PROSITE" id="PS51910">
    <property type="entry name" value="GH18_2"/>
    <property type="match status" value="1"/>
</dbReference>
<proteinExistence type="inferred from homology"/>